<evidence type="ECO:0000250" key="1">
    <source>
        <dbReference type="UniProtKB" id="P83731"/>
    </source>
</evidence>
<evidence type="ECO:0000256" key="2">
    <source>
        <dbReference type="SAM" id="MobiDB-lite"/>
    </source>
</evidence>
<evidence type="ECO:0000305" key="3"/>
<protein>
    <recommendedName>
        <fullName evidence="3">Large ribosomal subunit protein eL24</fullName>
    </recommendedName>
    <alternativeName>
        <fullName>60S ribosomal protein L24</fullName>
    </alternativeName>
</protein>
<reference key="1">
    <citation type="journal article" date="2001" name="Proc. Natl. Acad. Sci. U.S.A.">
        <title>Hypoxia-induced gene expression profiling in the euryoxic fish Gillichthys mirabilis.</title>
        <authorList>
            <person name="Gracey A.Y."/>
            <person name="Troll J.V."/>
            <person name="Somero G.N."/>
        </authorList>
    </citation>
    <scope>NUCLEOTIDE SEQUENCE [MRNA]</scope>
    <source>
        <tissue>Liver</tissue>
    </source>
</reference>
<organism>
    <name type="scientific">Gillichthys mirabilis</name>
    <name type="common">Long-jawed mudsucker</name>
    <dbReference type="NCBI Taxonomy" id="8222"/>
    <lineage>
        <taxon>Eukaryota</taxon>
        <taxon>Metazoa</taxon>
        <taxon>Chordata</taxon>
        <taxon>Craniata</taxon>
        <taxon>Vertebrata</taxon>
        <taxon>Euteleostomi</taxon>
        <taxon>Actinopterygii</taxon>
        <taxon>Neopterygii</taxon>
        <taxon>Teleostei</taxon>
        <taxon>Neoteleostei</taxon>
        <taxon>Acanthomorphata</taxon>
        <taxon>Gobiaria</taxon>
        <taxon>Gobiiformes</taxon>
        <taxon>Gobioidei</taxon>
        <taxon>Gobiidae</taxon>
        <taxon>Gobionellinae</taxon>
        <taxon>Gillichthys</taxon>
    </lineage>
</organism>
<sequence length="157" mass="17768">MKVELCSFSGYKIYPGHGRRYARIDGKVFQFLNAKCESAFLAKRNPRQINWTVLYRRKHKKGQSEEVTKKRTRRAVKFQRAITGASLAEIMAKRNQKPEVRKAQREQAIRAAKESKKAKQATKKPAAASAKTSAKTAQKPKIAKPMKISAPRVGGKR</sequence>
<gene>
    <name type="primary">rpl24</name>
</gene>
<comment type="function">
    <text evidence="1">Component of the large ribosomal subunit. The ribosome is a large ribonucleoprotein complex responsible for the synthesis of proteins in the cell.</text>
</comment>
<comment type="subunit">
    <text evidence="1">Component of the large ribosomal subunit.</text>
</comment>
<comment type="subcellular location">
    <subcellularLocation>
        <location evidence="1">Cytoplasm</location>
    </subcellularLocation>
</comment>
<comment type="similarity">
    <text evidence="3">Belongs to the eukaryotic ribosomal protein eL24 family.</text>
</comment>
<comment type="sequence caution" evidence="3">
    <conflict type="frameshift">
        <sequence resource="EMBL-CDS" id="AAG13295"/>
    </conflict>
</comment>
<accession>Q9DFQ7</accession>
<dbReference type="EMBL" id="AF266175">
    <property type="protein sequence ID" value="AAG13295.1"/>
    <property type="status" value="ALT_FRAME"/>
    <property type="molecule type" value="mRNA"/>
</dbReference>
<dbReference type="SMR" id="Q9DFQ7"/>
<dbReference type="GO" id="GO:0022625">
    <property type="term" value="C:cytosolic large ribosomal subunit"/>
    <property type="evidence" value="ECO:0007669"/>
    <property type="project" value="TreeGrafter"/>
</dbReference>
<dbReference type="GO" id="GO:0003729">
    <property type="term" value="F:mRNA binding"/>
    <property type="evidence" value="ECO:0007669"/>
    <property type="project" value="TreeGrafter"/>
</dbReference>
<dbReference type="GO" id="GO:0003735">
    <property type="term" value="F:structural constituent of ribosome"/>
    <property type="evidence" value="ECO:0000250"/>
    <property type="project" value="UniProtKB"/>
</dbReference>
<dbReference type="GO" id="GO:0002181">
    <property type="term" value="P:cytoplasmic translation"/>
    <property type="evidence" value="ECO:0000250"/>
    <property type="project" value="UniProtKB"/>
</dbReference>
<dbReference type="CDD" id="cd00472">
    <property type="entry name" value="Ribosomal_L24e_L24"/>
    <property type="match status" value="1"/>
</dbReference>
<dbReference type="FunFam" id="2.30.170.20:FF:000004">
    <property type="entry name" value="60S ribosomal protein l24"/>
    <property type="match status" value="1"/>
</dbReference>
<dbReference type="Gene3D" id="6.10.250.1270">
    <property type="match status" value="1"/>
</dbReference>
<dbReference type="Gene3D" id="2.30.170.20">
    <property type="entry name" value="Ribosomal protein L24e"/>
    <property type="match status" value="1"/>
</dbReference>
<dbReference type="InterPro" id="IPR038630">
    <property type="entry name" value="L24e/L24_sf"/>
</dbReference>
<dbReference type="InterPro" id="IPR056366">
    <property type="entry name" value="Ribosomal_eL24"/>
</dbReference>
<dbReference type="InterPro" id="IPR000988">
    <property type="entry name" value="Ribosomal_eL24-rel_N"/>
</dbReference>
<dbReference type="InterPro" id="IPR023442">
    <property type="entry name" value="Ribosomal_eL24_CS"/>
</dbReference>
<dbReference type="InterPro" id="IPR011017">
    <property type="entry name" value="TRASH_dom"/>
</dbReference>
<dbReference type="PANTHER" id="PTHR10792">
    <property type="entry name" value="60S RIBOSOMAL PROTEIN L24"/>
    <property type="match status" value="1"/>
</dbReference>
<dbReference type="PANTHER" id="PTHR10792:SF1">
    <property type="entry name" value="RIBOSOMAL PROTEIN L24"/>
    <property type="match status" value="1"/>
</dbReference>
<dbReference type="Pfam" id="PF01246">
    <property type="entry name" value="Ribosomal_L24e"/>
    <property type="match status" value="1"/>
</dbReference>
<dbReference type="SMART" id="SM00746">
    <property type="entry name" value="TRASH"/>
    <property type="match status" value="1"/>
</dbReference>
<dbReference type="SUPFAM" id="SSF57716">
    <property type="entry name" value="Glucocorticoid receptor-like (DNA-binding domain)"/>
    <property type="match status" value="1"/>
</dbReference>
<dbReference type="PROSITE" id="PS01073">
    <property type="entry name" value="RIBOSOMAL_L24E"/>
    <property type="match status" value="1"/>
</dbReference>
<keyword id="KW-0963">Cytoplasm</keyword>
<keyword id="KW-0687">Ribonucleoprotein</keyword>
<keyword id="KW-0689">Ribosomal protein</keyword>
<name>RL24_GILMI</name>
<proteinExistence type="evidence at transcript level"/>
<feature type="chain" id="PRO_0000136872" description="Large ribosomal subunit protein eL24">
    <location>
        <begin position="1"/>
        <end position="157"/>
    </location>
</feature>
<feature type="region of interest" description="Disordered" evidence="2">
    <location>
        <begin position="94"/>
        <end position="157"/>
    </location>
</feature>
<feature type="compositionally biased region" description="Basic and acidic residues" evidence="2">
    <location>
        <begin position="96"/>
        <end position="117"/>
    </location>
</feature>
<feature type="compositionally biased region" description="Low complexity" evidence="2">
    <location>
        <begin position="123"/>
        <end position="140"/>
    </location>
</feature>